<reference key="1">
    <citation type="journal article" date="2008" name="PLoS Genet.">
        <title>Complete genome sequence of the N2-fixing broad host range endophyte Klebsiella pneumoniae 342 and virulence predictions verified in mice.</title>
        <authorList>
            <person name="Fouts D.E."/>
            <person name="Tyler H.L."/>
            <person name="DeBoy R.T."/>
            <person name="Daugherty S."/>
            <person name="Ren Q."/>
            <person name="Badger J.H."/>
            <person name="Durkin A.S."/>
            <person name="Huot H."/>
            <person name="Shrivastava S."/>
            <person name="Kothari S."/>
            <person name="Dodson R.J."/>
            <person name="Mohamoud Y."/>
            <person name="Khouri H."/>
            <person name="Roesch L.F.W."/>
            <person name="Krogfelt K.A."/>
            <person name="Struve C."/>
            <person name="Triplett E.W."/>
            <person name="Methe B.A."/>
        </authorList>
    </citation>
    <scope>NUCLEOTIDE SEQUENCE [LARGE SCALE GENOMIC DNA]</scope>
    <source>
        <strain>342</strain>
    </source>
</reference>
<sequence length="419" mass="45225">MKFDCAIVGGGLAGLLCGLALNQYGLRSVIISRGQSALHFSSASLDLLSALPNGDKVTDVAQGLQQLAEQLPEHPYSRLGAGAVLEYATQTEALLAACGANMQGEARQPHLRVTPLGTLRPAWLSPEEVLLAPFAQQHVCLVGISGFADFQPHLAAAALGQHGVTAAAVEIELPLLDVLRDNPTEFRAANIARVLDDENLWPALHAALLPLAQQHDLLIMPACFGLADDRLYRWLQTRLPCPLRLLPTLPPSVPGMRLHSQLQRQFIREGGTWLAGDEVVKISHRQGAVEAVWTRNHGDVALRPRFTVLASGSFFSNGLVATRDSVREPILGLDLQQTLPRESWYQRDFFVSQPWQRFGVKTDALLRPVLGGQPFHNLFAIGSLIGGFDAIQLGCGGGVCAVTALHAARQIHALAGDRP</sequence>
<keyword id="KW-0285">Flavoprotein</keyword>
<keyword id="KW-0288">FMN</keyword>
<keyword id="KW-0560">Oxidoreductase</keyword>
<evidence type="ECO:0000255" key="1">
    <source>
        <dbReference type="HAMAP-Rule" id="MF_00753"/>
    </source>
</evidence>
<dbReference type="EC" id="1.1.5.3" evidence="1"/>
<dbReference type="EMBL" id="CP000964">
    <property type="protein sequence ID" value="ACI08817.1"/>
    <property type="molecule type" value="Genomic_DNA"/>
</dbReference>
<dbReference type="KEGG" id="kpe:KPK_1502"/>
<dbReference type="HOGENOM" id="CLU_047793_0_0_6"/>
<dbReference type="UniPathway" id="UPA00618">
    <property type="reaction ID" value="UER00673"/>
</dbReference>
<dbReference type="Proteomes" id="UP000001734">
    <property type="component" value="Chromosome"/>
</dbReference>
<dbReference type="GO" id="GO:0009331">
    <property type="term" value="C:glycerol-3-phosphate dehydrogenase (FAD) complex"/>
    <property type="evidence" value="ECO:0007669"/>
    <property type="project" value="InterPro"/>
</dbReference>
<dbReference type="GO" id="GO:0004368">
    <property type="term" value="F:glycerol-3-phosphate dehydrogenase (quinone) activity"/>
    <property type="evidence" value="ECO:0007669"/>
    <property type="project" value="UniProtKB-UniRule"/>
</dbReference>
<dbReference type="GO" id="GO:0019563">
    <property type="term" value="P:glycerol catabolic process"/>
    <property type="evidence" value="ECO:0007669"/>
    <property type="project" value="UniProtKB-UniRule"/>
</dbReference>
<dbReference type="Gene3D" id="3.30.9.10">
    <property type="entry name" value="D-Amino Acid Oxidase, subunit A, domain 2"/>
    <property type="match status" value="1"/>
</dbReference>
<dbReference type="Gene3D" id="3.50.50.60">
    <property type="entry name" value="FAD/NAD(P)-binding domain"/>
    <property type="match status" value="1"/>
</dbReference>
<dbReference type="HAMAP" id="MF_00753">
    <property type="entry name" value="Glycerol3P_GlpB"/>
    <property type="match status" value="1"/>
</dbReference>
<dbReference type="InterPro" id="IPR003953">
    <property type="entry name" value="FAD-dep_OxRdtase_2_FAD-bd"/>
</dbReference>
<dbReference type="InterPro" id="IPR036188">
    <property type="entry name" value="FAD/NAD-bd_sf"/>
</dbReference>
<dbReference type="InterPro" id="IPR009158">
    <property type="entry name" value="G3P_DH_GlpB_su"/>
</dbReference>
<dbReference type="NCBIfam" id="TIGR03378">
    <property type="entry name" value="glycerol3P_GlpB"/>
    <property type="match status" value="1"/>
</dbReference>
<dbReference type="NCBIfam" id="NF003718">
    <property type="entry name" value="PRK05329.1-1"/>
    <property type="match status" value="1"/>
</dbReference>
<dbReference type="NCBIfam" id="NF003719">
    <property type="entry name" value="PRK05329.1-2"/>
    <property type="match status" value="1"/>
</dbReference>
<dbReference type="NCBIfam" id="NF003720">
    <property type="entry name" value="PRK05329.1-3"/>
    <property type="match status" value="1"/>
</dbReference>
<dbReference type="Pfam" id="PF00890">
    <property type="entry name" value="FAD_binding_2"/>
    <property type="match status" value="1"/>
</dbReference>
<dbReference type="PIRSF" id="PIRSF000141">
    <property type="entry name" value="Anaerobic_G3P_dh"/>
    <property type="match status" value="1"/>
</dbReference>
<dbReference type="SUPFAM" id="SSF51905">
    <property type="entry name" value="FAD/NAD(P)-binding domain"/>
    <property type="match status" value="1"/>
</dbReference>
<accession>B5XNY5</accession>
<feature type="chain" id="PRO_1000133366" description="Anaerobic glycerol-3-phosphate dehydrogenase subunit B">
    <location>
        <begin position="1"/>
        <end position="419"/>
    </location>
</feature>
<protein>
    <recommendedName>
        <fullName evidence="1">Anaerobic glycerol-3-phosphate dehydrogenase subunit B</fullName>
        <shortName evidence="1">Anaerobic G-3-P dehydrogenase subunit B</shortName>
        <shortName evidence="1">Anaerobic G3Pdhase B</shortName>
        <ecNumber evidence="1">1.1.5.3</ecNumber>
    </recommendedName>
</protein>
<organism>
    <name type="scientific">Klebsiella pneumoniae (strain 342)</name>
    <dbReference type="NCBI Taxonomy" id="507522"/>
    <lineage>
        <taxon>Bacteria</taxon>
        <taxon>Pseudomonadati</taxon>
        <taxon>Pseudomonadota</taxon>
        <taxon>Gammaproteobacteria</taxon>
        <taxon>Enterobacterales</taxon>
        <taxon>Enterobacteriaceae</taxon>
        <taxon>Klebsiella/Raoultella group</taxon>
        <taxon>Klebsiella</taxon>
        <taxon>Klebsiella pneumoniae complex</taxon>
    </lineage>
</organism>
<name>GLPB_KLEP3</name>
<gene>
    <name evidence="1" type="primary">glpB</name>
    <name type="ordered locus">KPK_1502</name>
</gene>
<comment type="function">
    <text evidence="1">Conversion of glycerol 3-phosphate to dihydroxyacetone. Uses fumarate or nitrate as electron acceptor.</text>
</comment>
<comment type="catalytic activity">
    <reaction evidence="1">
        <text>a quinone + sn-glycerol 3-phosphate = dihydroxyacetone phosphate + a quinol</text>
        <dbReference type="Rhea" id="RHEA:18977"/>
        <dbReference type="ChEBI" id="CHEBI:24646"/>
        <dbReference type="ChEBI" id="CHEBI:57597"/>
        <dbReference type="ChEBI" id="CHEBI:57642"/>
        <dbReference type="ChEBI" id="CHEBI:132124"/>
        <dbReference type="EC" id="1.1.5.3"/>
    </reaction>
</comment>
<comment type="cofactor">
    <cofactor evidence="1">
        <name>FMN</name>
        <dbReference type="ChEBI" id="CHEBI:58210"/>
    </cofactor>
</comment>
<comment type="pathway">
    <text evidence="1">Polyol metabolism; glycerol degradation via glycerol kinase pathway; glycerone phosphate from sn-glycerol 3-phosphate (anaerobic route): step 1/1.</text>
</comment>
<comment type="subunit">
    <text evidence="1">Composed of a catalytic GlpA/B dimer and of membrane bound GlpC.</text>
</comment>
<comment type="similarity">
    <text evidence="1">Belongs to the anaerobic G-3-P dehydrogenase subunit B family.</text>
</comment>
<proteinExistence type="inferred from homology"/>